<name>GPMA_LEIXX</name>
<proteinExistence type="inferred from homology"/>
<feature type="chain" id="PRO_0000229126" description="2,3-bisphosphoglycerate-dependent phosphoglycerate mutase">
    <location>
        <begin position="1"/>
        <end position="249"/>
    </location>
</feature>
<feature type="active site" description="Tele-phosphohistidine intermediate" evidence="1">
    <location>
        <position position="12"/>
    </location>
</feature>
<feature type="active site" description="Proton donor/acceptor" evidence="1">
    <location>
        <position position="90"/>
    </location>
</feature>
<feature type="binding site" evidence="1">
    <location>
        <begin position="11"/>
        <end position="18"/>
    </location>
    <ligand>
        <name>substrate</name>
    </ligand>
</feature>
<feature type="binding site" evidence="1">
    <location>
        <begin position="24"/>
        <end position="25"/>
    </location>
    <ligand>
        <name>substrate</name>
    </ligand>
</feature>
<feature type="binding site" evidence="1">
    <location>
        <position position="63"/>
    </location>
    <ligand>
        <name>substrate</name>
    </ligand>
</feature>
<feature type="binding site" evidence="1">
    <location>
        <begin position="90"/>
        <end position="93"/>
    </location>
    <ligand>
        <name>substrate</name>
    </ligand>
</feature>
<feature type="binding site" evidence="1">
    <location>
        <position position="101"/>
    </location>
    <ligand>
        <name>substrate</name>
    </ligand>
</feature>
<feature type="binding site" evidence="1">
    <location>
        <begin position="117"/>
        <end position="118"/>
    </location>
    <ligand>
        <name>substrate</name>
    </ligand>
</feature>
<feature type="binding site" evidence="1">
    <location>
        <begin position="185"/>
        <end position="186"/>
    </location>
    <ligand>
        <name>substrate</name>
    </ligand>
</feature>
<feature type="site" description="Transition state stabilizer" evidence="1">
    <location>
        <position position="184"/>
    </location>
</feature>
<sequence>MSASHALILLRHGNSEWNRQNLFTGWVDVRLSEQGVAEAKRAGELLAESGLVPDILYTSLLTRAIQTANHALDAADRLWIPVVRSWRLNERHYGALQGLDKAETLEKYGPEQFQLWRRSFDVPPPPLADDSEWSQADDPRYADLGADLPRTECLKDVIARMLPFWESDITTSLSAGKTVLVTAHGNSLRALVKHLDGISDDDIAELNIPTGVPLVYKLDDSFKPVEPAAYLDPEAAAVGAAAVAAQGKK</sequence>
<gene>
    <name evidence="1" type="primary">gpmA</name>
    <name type="ordered locus">Lxx18320</name>
</gene>
<accession>Q6ADH3</accession>
<reference key="1">
    <citation type="journal article" date="2004" name="Mol. Plant Microbe Interact.">
        <title>The genome sequence of the Gram-positive sugarcane pathogen Leifsonia xyli subsp. xyli.</title>
        <authorList>
            <person name="Monteiro-Vitorello C.B."/>
            <person name="Camargo L.E.A."/>
            <person name="Van Sluys M.A."/>
            <person name="Kitajima J.P."/>
            <person name="Truffi D."/>
            <person name="do Amaral A.M."/>
            <person name="Harakava R."/>
            <person name="de Oliveira J.C.F."/>
            <person name="Wood D."/>
            <person name="de Oliveira M.C."/>
            <person name="Miyaki C.Y."/>
            <person name="Takita M.A."/>
            <person name="da Silva A.C.R."/>
            <person name="Furlan L.R."/>
            <person name="Carraro D.M."/>
            <person name="Camarotte G."/>
            <person name="Almeida N.F. Jr."/>
            <person name="Carrer H."/>
            <person name="Coutinho L.L."/>
            <person name="El-Dorry H.A."/>
            <person name="Ferro M.I.T."/>
            <person name="Gagliardi P.R."/>
            <person name="Giglioti E."/>
            <person name="Goldman M.H.S."/>
            <person name="Goldman G.H."/>
            <person name="Kimura E.T."/>
            <person name="Ferro E.S."/>
            <person name="Kuramae E.E."/>
            <person name="Lemos E.G.M."/>
            <person name="Lemos M.V.F."/>
            <person name="Mauro S.M.Z."/>
            <person name="Machado M.A."/>
            <person name="Marino C.L."/>
            <person name="Menck C.F."/>
            <person name="Nunes L.R."/>
            <person name="Oliveira R.C."/>
            <person name="Pereira G.G."/>
            <person name="Siqueira W."/>
            <person name="de Souza A.A."/>
            <person name="Tsai S.M."/>
            <person name="Zanca A.S."/>
            <person name="Simpson A.J.G."/>
            <person name="Brumbley S.M."/>
            <person name="Setubal J.C."/>
        </authorList>
    </citation>
    <scope>NUCLEOTIDE SEQUENCE [LARGE SCALE GENOMIC DNA]</scope>
    <source>
        <strain>CTCB07</strain>
    </source>
</reference>
<organism>
    <name type="scientific">Leifsonia xyli subsp. xyli (strain CTCB07)</name>
    <dbReference type="NCBI Taxonomy" id="281090"/>
    <lineage>
        <taxon>Bacteria</taxon>
        <taxon>Bacillati</taxon>
        <taxon>Actinomycetota</taxon>
        <taxon>Actinomycetes</taxon>
        <taxon>Micrococcales</taxon>
        <taxon>Microbacteriaceae</taxon>
        <taxon>Leifsonia</taxon>
    </lineage>
</organism>
<dbReference type="EC" id="5.4.2.11" evidence="1"/>
<dbReference type="EMBL" id="AE016822">
    <property type="protein sequence ID" value="AAT89573.1"/>
    <property type="molecule type" value="Genomic_DNA"/>
</dbReference>
<dbReference type="RefSeq" id="WP_011186561.1">
    <property type="nucleotide sequence ID" value="NC_006087.1"/>
</dbReference>
<dbReference type="SMR" id="Q6ADH3"/>
<dbReference type="STRING" id="281090.Lxx18320"/>
<dbReference type="KEGG" id="lxx:Lxx18320"/>
<dbReference type="eggNOG" id="COG0588">
    <property type="taxonomic scope" value="Bacteria"/>
</dbReference>
<dbReference type="HOGENOM" id="CLU_033323_1_1_11"/>
<dbReference type="UniPathway" id="UPA00109">
    <property type="reaction ID" value="UER00186"/>
</dbReference>
<dbReference type="Proteomes" id="UP000001306">
    <property type="component" value="Chromosome"/>
</dbReference>
<dbReference type="GO" id="GO:0004619">
    <property type="term" value="F:phosphoglycerate mutase activity"/>
    <property type="evidence" value="ECO:0007669"/>
    <property type="project" value="UniProtKB-EC"/>
</dbReference>
<dbReference type="GO" id="GO:0006094">
    <property type="term" value="P:gluconeogenesis"/>
    <property type="evidence" value="ECO:0007669"/>
    <property type="project" value="UniProtKB-UniRule"/>
</dbReference>
<dbReference type="GO" id="GO:0006096">
    <property type="term" value="P:glycolytic process"/>
    <property type="evidence" value="ECO:0007669"/>
    <property type="project" value="UniProtKB-UniRule"/>
</dbReference>
<dbReference type="CDD" id="cd07067">
    <property type="entry name" value="HP_PGM_like"/>
    <property type="match status" value="1"/>
</dbReference>
<dbReference type="FunFam" id="3.40.50.1240:FF:000003">
    <property type="entry name" value="2,3-bisphosphoglycerate-dependent phosphoglycerate mutase"/>
    <property type="match status" value="1"/>
</dbReference>
<dbReference type="Gene3D" id="3.40.50.1240">
    <property type="entry name" value="Phosphoglycerate mutase-like"/>
    <property type="match status" value="1"/>
</dbReference>
<dbReference type="HAMAP" id="MF_01039">
    <property type="entry name" value="PGAM_GpmA"/>
    <property type="match status" value="1"/>
</dbReference>
<dbReference type="InterPro" id="IPR013078">
    <property type="entry name" value="His_Pase_superF_clade-1"/>
</dbReference>
<dbReference type="InterPro" id="IPR029033">
    <property type="entry name" value="His_PPase_superfam"/>
</dbReference>
<dbReference type="InterPro" id="IPR005952">
    <property type="entry name" value="Phosphogly_mut1"/>
</dbReference>
<dbReference type="NCBIfam" id="TIGR01258">
    <property type="entry name" value="pgm_1"/>
    <property type="match status" value="1"/>
</dbReference>
<dbReference type="NCBIfam" id="NF010713">
    <property type="entry name" value="PRK14115.1"/>
    <property type="match status" value="1"/>
</dbReference>
<dbReference type="NCBIfam" id="NF010718">
    <property type="entry name" value="PRK14120.1"/>
    <property type="match status" value="1"/>
</dbReference>
<dbReference type="PANTHER" id="PTHR11931">
    <property type="entry name" value="PHOSPHOGLYCERATE MUTASE"/>
    <property type="match status" value="1"/>
</dbReference>
<dbReference type="Pfam" id="PF00300">
    <property type="entry name" value="His_Phos_1"/>
    <property type="match status" value="1"/>
</dbReference>
<dbReference type="PIRSF" id="PIRSF000709">
    <property type="entry name" value="6PFK_2-Ptase"/>
    <property type="match status" value="1"/>
</dbReference>
<dbReference type="SMART" id="SM00855">
    <property type="entry name" value="PGAM"/>
    <property type="match status" value="1"/>
</dbReference>
<dbReference type="SUPFAM" id="SSF53254">
    <property type="entry name" value="Phosphoglycerate mutase-like"/>
    <property type="match status" value="1"/>
</dbReference>
<keyword id="KW-0312">Gluconeogenesis</keyword>
<keyword id="KW-0324">Glycolysis</keyword>
<keyword id="KW-0413">Isomerase</keyword>
<keyword id="KW-1185">Reference proteome</keyword>
<evidence type="ECO:0000255" key="1">
    <source>
        <dbReference type="HAMAP-Rule" id="MF_01039"/>
    </source>
</evidence>
<comment type="function">
    <text evidence="1">Catalyzes the interconversion of 2-phosphoglycerate and 3-phosphoglycerate.</text>
</comment>
<comment type="catalytic activity">
    <reaction evidence="1">
        <text>(2R)-2-phosphoglycerate = (2R)-3-phosphoglycerate</text>
        <dbReference type="Rhea" id="RHEA:15901"/>
        <dbReference type="ChEBI" id="CHEBI:58272"/>
        <dbReference type="ChEBI" id="CHEBI:58289"/>
        <dbReference type="EC" id="5.4.2.11"/>
    </reaction>
</comment>
<comment type="pathway">
    <text evidence="1">Carbohydrate degradation; glycolysis; pyruvate from D-glyceraldehyde 3-phosphate: step 3/5.</text>
</comment>
<comment type="similarity">
    <text evidence="1">Belongs to the phosphoglycerate mutase family. BPG-dependent PGAM subfamily.</text>
</comment>
<protein>
    <recommendedName>
        <fullName evidence="1">2,3-bisphosphoglycerate-dependent phosphoglycerate mutase</fullName>
        <shortName evidence="1">BPG-dependent PGAM</shortName>
        <shortName evidence="1">PGAM</shortName>
        <shortName evidence="1">Phosphoglyceromutase</shortName>
        <shortName evidence="1">dPGM</shortName>
        <ecNumber evidence="1">5.4.2.11</ecNumber>
    </recommendedName>
</protein>